<keyword id="KW-0010">Activator</keyword>
<keyword id="KW-0235">DNA replication</keyword>
<keyword id="KW-0238">DNA-binding</keyword>
<keyword id="KW-0244">Early protein</keyword>
<keyword id="KW-1048">Host nucleus</keyword>
<keyword id="KW-1017">Isopeptide bond</keyword>
<keyword id="KW-0597">Phosphoprotein</keyword>
<keyword id="KW-0678">Repressor</keyword>
<keyword id="KW-0804">Transcription</keyword>
<keyword id="KW-0805">Transcription regulation</keyword>
<keyword id="KW-0832">Ubl conjugation</keyword>
<comment type="function">
    <text evidence="1">Plays a role in the initiation of viral DNA replication. A dimer of E2 interacts with a dimer of E1 in order to improve specificity of E1 DNA binding activity. Once the complex recognizes and binds DNA at specific sites, the E2 dimer is removed from DNA. E2 also regulates viral transcription through binding to the E2RE response element (5'-ACCNNNNNNGGT-3') present in multiple copies in the regulatory regions of the viral genome. Activates or represses transcription depending on E2RE's position with regards to proximal promoter elements including the TATA-box. Repression occurs by sterically hindering the assembly of the transcription initiation complex.</text>
</comment>
<comment type="subunit">
    <text evidence="1">Binds DNA as homodimer. Interacts with protein E1; this interaction greatly increases E1 DNA-binding activity. Interacts with protein L1; this interaction enhances E2-dependent replication and transcription activation. Interacts with protein L2; this interaction inhibits E2 transcriptional activity but not DNA replication function E2. Interacts with protein E7; this interaction inhibits E7 oncogenic activity. Interacts with host TAF1; this interaction modulates E2-dependent transcriptional regulation. Interacts with host BRD4; this interaction mediates E2 transcriptional activation function. Additionally, the interaction with host BRD4 on mitotic chromosomes mediates tethering of the viral genome. Interacts with host TOPBP1; this interaction is required for optimal viral DNA replication.</text>
</comment>
<comment type="subcellular location">
    <subcellularLocation>
        <location evidence="1">Host nucleus</location>
    </subcellularLocation>
</comment>
<comment type="PTM">
    <text evidence="1">Phosphorylated.</text>
</comment>
<comment type="PTM">
    <text evidence="1">Sumoylation plays a regulatory role in E2 transcriptional activity.</text>
</comment>
<comment type="similarity">
    <text evidence="1">Belongs to the papillomaviridae E2 protein family.</text>
</comment>
<organismHost>
    <name type="scientific">Homo sapiens</name>
    <name type="common">Human</name>
    <dbReference type="NCBI Taxonomy" id="9606"/>
</organismHost>
<feature type="chain" id="PRO_0000133231" description="Regulatory protein E2">
    <location>
        <begin position="1"/>
        <end position="384"/>
    </location>
</feature>
<feature type="region of interest" description="Transactivation domain" evidence="1">
    <location>
        <begin position="1"/>
        <end position="200"/>
    </location>
</feature>
<feature type="region of interest" description="Disordered" evidence="2">
    <location>
        <begin position="218"/>
        <end position="292"/>
    </location>
</feature>
<feature type="region of interest" description="DNA-binding domain" evidence="1">
    <location>
        <begin position="301"/>
        <end position="384"/>
    </location>
</feature>
<feature type="compositionally biased region" description="Polar residues" evidence="2">
    <location>
        <begin position="220"/>
        <end position="237"/>
    </location>
</feature>
<feature type="compositionally biased region" description="Low complexity" evidence="2">
    <location>
        <begin position="251"/>
        <end position="263"/>
    </location>
</feature>
<feature type="cross-link" description="Glycyl lysine isopeptide (Lys-Gly) (interchain with G-Cter in SUMO)" evidence="1">
    <location>
        <position position="308"/>
    </location>
</feature>
<sequence length="384" mass="44160">METLCQRLDACQEKILDCFERDSKNITDHIDYWKAVRQENVIYYKARENNMTKLGHQVVPCLQVCKAKACVAIELQIALESLCKTEYNMEEWTLRDVCESMWYTEPKQCFKKQGQHIEVWFDGSKDNRAEYVVWKWVYYCGEDGWCKVSSAVSYEGIYYIHDGHKTYYTNFKDEATKYGCKGTWEVHMGKQSIYCPDSVSSTFRSNVSSVETVNEYYSHKTPTTSTPVGTYEASSSLRPGKRPRTTEPDSTDSTTQSTTTARESYAECVARNTDNTNNNTRKHLPGGASCNNTEIDSGYKTAPVVHIKGEANRLKCLRYRFQKHKQLFVTVSSTYHWTNVNCAVNNSYITVVYKDETQRQKFLDIVKIPPSVSLVLGHMTCVDM</sequence>
<reference key="1">
    <citation type="journal article" date="1994" name="Curr. Top. Microbiol. Immunol.">
        <title>Primer-directed sequencing of human papillomavirus types.</title>
        <authorList>
            <person name="Delius H."/>
            <person name="Hofmann B."/>
        </authorList>
    </citation>
    <scope>NUCLEOTIDE SEQUENCE [GENOMIC DNA]</scope>
</reference>
<organism>
    <name type="scientific">Human papillomavirus type 53</name>
    <dbReference type="NCBI Taxonomy" id="333765"/>
    <lineage>
        <taxon>Viruses</taxon>
        <taxon>Monodnaviria</taxon>
        <taxon>Shotokuvirae</taxon>
        <taxon>Cossaviricota</taxon>
        <taxon>Papovaviricetes</taxon>
        <taxon>Zurhausenvirales</taxon>
        <taxon>Papillomaviridae</taxon>
        <taxon>Firstpapillomavirinae</taxon>
        <taxon>Alphapapillomavirus</taxon>
        <taxon>Alphapapillomavirus 6</taxon>
    </lineage>
</organism>
<name>VE2_HPV53</name>
<evidence type="ECO:0000255" key="1">
    <source>
        <dbReference type="HAMAP-Rule" id="MF_04001"/>
    </source>
</evidence>
<evidence type="ECO:0000256" key="2">
    <source>
        <dbReference type="SAM" id="MobiDB-lite"/>
    </source>
</evidence>
<proteinExistence type="inferred from homology"/>
<protein>
    <recommendedName>
        <fullName evidence="1">Regulatory protein E2</fullName>
    </recommendedName>
</protein>
<gene>
    <name evidence="1" type="primary">E2</name>
</gene>
<dbReference type="EMBL" id="X74482">
    <property type="protein sequence ID" value="CAA52593.1"/>
    <property type="molecule type" value="Genomic_DNA"/>
</dbReference>
<dbReference type="PIR" id="S36529">
    <property type="entry name" value="S36529"/>
</dbReference>
<dbReference type="RefSeq" id="NP_041846.1">
    <property type="nucleotide sequence ID" value="NC_001593.1"/>
</dbReference>
<dbReference type="SMR" id="P36797"/>
<dbReference type="GeneID" id="1489466"/>
<dbReference type="KEGG" id="vg:1489466"/>
<dbReference type="OrthoDB" id="15886at10239"/>
<dbReference type="Proteomes" id="UP000009126">
    <property type="component" value="Genome"/>
</dbReference>
<dbReference type="GO" id="GO:0042025">
    <property type="term" value="C:host cell nucleus"/>
    <property type="evidence" value="ECO:0007669"/>
    <property type="project" value="UniProtKB-SubCell"/>
</dbReference>
<dbReference type="GO" id="GO:0003677">
    <property type="term" value="F:DNA binding"/>
    <property type="evidence" value="ECO:0007669"/>
    <property type="project" value="UniProtKB-UniRule"/>
</dbReference>
<dbReference type="GO" id="GO:0003700">
    <property type="term" value="F:DNA-binding transcription factor activity"/>
    <property type="evidence" value="ECO:0007669"/>
    <property type="project" value="UniProtKB-UniRule"/>
</dbReference>
<dbReference type="GO" id="GO:0000166">
    <property type="term" value="F:nucleotide binding"/>
    <property type="evidence" value="ECO:0007669"/>
    <property type="project" value="UniProtKB-UniRule"/>
</dbReference>
<dbReference type="GO" id="GO:0006260">
    <property type="term" value="P:DNA replication"/>
    <property type="evidence" value="ECO:0007669"/>
    <property type="project" value="UniProtKB-KW"/>
</dbReference>
<dbReference type="GO" id="GO:0006351">
    <property type="term" value="P:DNA-templated transcription"/>
    <property type="evidence" value="ECO:0007669"/>
    <property type="project" value="UniProtKB-UniRule"/>
</dbReference>
<dbReference type="GO" id="GO:0006275">
    <property type="term" value="P:regulation of DNA replication"/>
    <property type="evidence" value="ECO:0007669"/>
    <property type="project" value="UniProtKB-UniRule"/>
</dbReference>
<dbReference type="GO" id="GO:0039693">
    <property type="term" value="P:viral DNA genome replication"/>
    <property type="evidence" value="ECO:0007669"/>
    <property type="project" value="UniProtKB-UniRule"/>
</dbReference>
<dbReference type="Gene3D" id="3.30.70.330">
    <property type="match status" value="1"/>
</dbReference>
<dbReference type="Gene3D" id="1.10.287.30">
    <property type="entry name" value="E2 (early) protein, N terminal domain, subdomain 1"/>
    <property type="match status" value="1"/>
</dbReference>
<dbReference type="Gene3D" id="2.170.200.10">
    <property type="entry name" value="Papillomavirus E2 early protein domain"/>
    <property type="match status" value="1"/>
</dbReference>
<dbReference type="HAMAP" id="MF_04001">
    <property type="entry name" value="PPV_E2"/>
    <property type="match status" value="1"/>
</dbReference>
<dbReference type="InterPro" id="IPR035975">
    <property type="entry name" value="E2/EBNA1_C_sf"/>
</dbReference>
<dbReference type="InterPro" id="IPR012677">
    <property type="entry name" value="Nucleotide-bd_a/b_plait_sf"/>
</dbReference>
<dbReference type="InterPro" id="IPR000427">
    <property type="entry name" value="Papillomavirus_E2_C"/>
</dbReference>
<dbReference type="InterPro" id="IPR001866">
    <property type="entry name" value="PPV_E2_N"/>
</dbReference>
<dbReference type="InterPro" id="IPR033668">
    <property type="entry name" value="Reg_prot_E2"/>
</dbReference>
<dbReference type="InterPro" id="IPR036050">
    <property type="entry name" value="Regulatory_protein_E2_N"/>
</dbReference>
<dbReference type="InterPro" id="IPR042503">
    <property type="entry name" value="Regulatory_protein_E2_N_1"/>
</dbReference>
<dbReference type="InterPro" id="IPR042504">
    <property type="entry name" value="Regulatory_protein_E2_N_2"/>
</dbReference>
<dbReference type="Pfam" id="PF00511">
    <property type="entry name" value="PPV_E2_C"/>
    <property type="match status" value="1"/>
</dbReference>
<dbReference type="Pfam" id="PF00508">
    <property type="entry name" value="PPV_E2_N"/>
    <property type="match status" value="1"/>
</dbReference>
<dbReference type="SUPFAM" id="SSF51332">
    <property type="entry name" value="E2 regulatory, transactivation domain"/>
    <property type="match status" value="1"/>
</dbReference>
<dbReference type="SUPFAM" id="SSF54957">
    <property type="entry name" value="Viral DNA-binding domain"/>
    <property type="match status" value="1"/>
</dbReference>
<accession>P36797</accession>